<comment type="function">
    <text evidence="1">Has a role in the initiation of DNA replication. Required at S-phase checkpoint (By similarity).</text>
</comment>
<comment type="subcellular location">
    <subcellularLocation>
        <location>Cytoplasm</location>
    </subcellularLocation>
    <subcellularLocation>
        <location evidence="1">Nucleus</location>
    </subcellularLocation>
</comment>
<comment type="similarity">
    <text evidence="3">Belongs to the SLD2 family.</text>
</comment>
<protein>
    <recommendedName>
        <fullName>DNA replication regulator SLD2</fullName>
    </recommendedName>
</protein>
<evidence type="ECO:0000250" key="1"/>
<evidence type="ECO:0000256" key="2">
    <source>
        <dbReference type="SAM" id="MobiDB-lite"/>
    </source>
</evidence>
<evidence type="ECO:0000305" key="3"/>
<dbReference type="EMBL" id="DS231670">
    <property type="protein sequence ID" value="ESU18017.1"/>
    <property type="molecule type" value="Genomic_DNA"/>
</dbReference>
<dbReference type="EMBL" id="HG970334">
    <property type="protein sequence ID" value="CEF87255.1"/>
    <property type="molecule type" value="Genomic_DNA"/>
</dbReference>
<dbReference type="RefSeq" id="XP_011325639.1">
    <property type="nucleotide sequence ID" value="XM_011327337.1"/>
</dbReference>
<dbReference type="SMR" id="Q4HW93"/>
<dbReference type="FunCoup" id="Q4HW93">
    <property type="interactions" value="51"/>
</dbReference>
<dbReference type="GeneID" id="23557649"/>
<dbReference type="KEGG" id="fgr:FGSG_10765"/>
<dbReference type="VEuPathDB" id="FungiDB:FGRAMPH1_01G20413"/>
<dbReference type="eggNOG" id="ENOG502SCF7">
    <property type="taxonomic scope" value="Eukaryota"/>
</dbReference>
<dbReference type="HOGENOM" id="CLU_033089_0_0_1"/>
<dbReference type="InParanoid" id="Q4HW93"/>
<dbReference type="OrthoDB" id="70793at110618"/>
<dbReference type="Proteomes" id="UP000070720">
    <property type="component" value="Chromosome 3"/>
</dbReference>
<dbReference type="GO" id="GO:0005737">
    <property type="term" value="C:cytoplasm"/>
    <property type="evidence" value="ECO:0007669"/>
    <property type="project" value="UniProtKB-SubCell"/>
</dbReference>
<dbReference type="GO" id="GO:0031261">
    <property type="term" value="C:DNA replication preinitiation complex"/>
    <property type="evidence" value="ECO:0007669"/>
    <property type="project" value="TreeGrafter"/>
</dbReference>
<dbReference type="GO" id="GO:0003688">
    <property type="term" value="F:DNA replication origin binding"/>
    <property type="evidence" value="ECO:0007669"/>
    <property type="project" value="TreeGrafter"/>
</dbReference>
<dbReference type="GO" id="GO:0003697">
    <property type="term" value="F:single-stranded DNA binding"/>
    <property type="evidence" value="ECO:0007669"/>
    <property type="project" value="TreeGrafter"/>
</dbReference>
<dbReference type="GO" id="GO:0006270">
    <property type="term" value="P:DNA replication initiation"/>
    <property type="evidence" value="ECO:0007669"/>
    <property type="project" value="InterPro"/>
</dbReference>
<dbReference type="GO" id="GO:0000727">
    <property type="term" value="P:double-strand break repair via break-induced replication"/>
    <property type="evidence" value="ECO:0007669"/>
    <property type="project" value="TreeGrafter"/>
</dbReference>
<dbReference type="GO" id="GO:1902977">
    <property type="term" value="P:mitotic DNA replication preinitiation complex assembly"/>
    <property type="evidence" value="ECO:0007669"/>
    <property type="project" value="TreeGrafter"/>
</dbReference>
<dbReference type="CDD" id="cd22289">
    <property type="entry name" value="RecQL4_SLD2_NTD"/>
    <property type="match status" value="1"/>
</dbReference>
<dbReference type="FunFam" id="1.10.10.1460:FF:000001">
    <property type="entry name" value="DNA replication regulator Sld2"/>
    <property type="match status" value="1"/>
</dbReference>
<dbReference type="Gene3D" id="1.10.10.1460">
    <property type="match status" value="1"/>
</dbReference>
<dbReference type="InterPro" id="IPR021110">
    <property type="entry name" value="DNA_rep_checkpnt_protein"/>
</dbReference>
<dbReference type="InterPro" id="IPR040203">
    <property type="entry name" value="Sld2"/>
</dbReference>
<dbReference type="PANTHER" id="PTHR28124">
    <property type="entry name" value="DNA REPLICATION REGULATOR SLD2"/>
    <property type="match status" value="1"/>
</dbReference>
<dbReference type="PANTHER" id="PTHR28124:SF1">
    <property type="entry name" value="DNA REPLICATION REGULATOR SLD2"/>
    <property type="match status" value="1"/>
</dbReference>
<dbReference type="Pfam" id="PF11719">
    <property type="entry name" value="Drc1-Sld2"/>
    <property type="match status" value="1"/>
</dbReference>
<feature type="chain" id="PRO_0000278435" description="DNA replication regulator SLD2">
    <location>
        <begin position="1"/>
        <end position="450"/>
    </location>
</feature>
<feature type="region of interest" description="Disordered" evidence="2">
    <location>
        <begin position="59"/>
        <end position="137"/>
    </location>
</feature>
<feature type="region of interest" description="Disordered" evidence="2">
    <location>
        <begin position="150"/>
        <end position="223"/>
    </location>
</feature>
<feature type="region of interest" description="Disordered" evidence="2">
    <location>
        <begin position="288"/>
        <end position="413"/>
    </location>
</feature>
<feature type="region of interest" description="Disordered" evidence="2">
    <location>
        <begin position="428"/>
        <end position="450"/>
    </location>
</feature>
<feature type="compositionally biased region" description="Basic and acidic residues" evidence="2">
    <location>
        <begin position="93"/>
        <end position="109"/>
    </location>
</feature>
<feature type="compositionally biased region" description="Polar residues" evidence="2">
    <location>
        <begin position="122"/>
        <end position="131"/>
    </location>
</feature>
<feature type="compositionally biased region" description="Basic and acidic residues" evidence="2">
    <location>
        <begin position="150"/>
        <end position="160"/>
    </location>
</feature>
<feature type="compositionally biased region" description="Basic and acidic residues" evidence="2">
    <location>
        <begin position="199"/>
        <end position="215"/>
    </location>
</feature>
<feature type="compositionally biased region" description="Basic residues" evidence="2">
    <location>
        <begin position="345"/>
        <end position="364"/>
    </location>
</feature>
<feature type="compositionally biased region" description="Basic and acidic residues" evidence="2">
    <location>
        <begin position="398"/>
        <end position="411"/>
    </location>
</feature>
<sequence length="450" mass="49990">MDEDTRAEYESTSQQLRIDLKTWETDWAKSHEGKKPGRGDIKANEDIAAKYKQYNKVRDILSGKISPPSKHAPKSTKRKSDGLSAQTPIKQNKHIETPAKNRTQNHDEDLMNTPAISRKLFSPTSVTSVGPTPQRDGQVLGLFDLLVEKELGTPSKKDSATKTGSARKVDATPSKRSAATDDDEDERLGRTPMSSSKRQRLDHFLTPLKNKDGNKDAATPSSVSKLQFDTPAFLKRNTLPVLEENGDFDAPAPLRLPRKPFARGLSEIVASLRKVEEESLDDDLDALRDIEDGGMGEPKPKTLFPSKPKDDILVDDNEARQLPLGGFDDEGVYDSPVEGDNPTRVYKKKGQKRTTRMAKMRPVRVNRPENMAANPQSDVENDEIQAGGEDAGSDFDDIVEKKPAQKKEGTVKKAARKVNELAHANFQRLKLRNHGAKGGPGINSRFRRRK</sequence>
<proteinExistence type="inferred from homology"/>
<keyword id="KW-0131">Cell cycle</keyword>
<keyword id="KW-0963">Cytoplasm</keyword>
<keyword id="KW-0235">DNA replication</keyword>
<keyword id="KW-0539">Nucleus</keyword>
<keyword id="KW-1185">Reference proteome</keyword>
<organism>
    <name type="scientific">Gibberella zeae (strain ATCC MYA-4620 / CBS 123657 / FGSC 9075 / NRRL 31084 / PH-1)</name>
    <name type="common">Wheat head blight fungus</name>
    <name type="synonym">Fusarium graminearum</name>
    <dbReference type="NCBI Taxonomy" id="229533"/>
    <lineage>
        <taxon>Eukaryota</taxon>
        <taxon>Fungi</taxon>
        <taxon>Dikarya</taxon>
        <taxon>Ascomycota</taxon>
        <taxon>Pezizomycotina</taxon>
        <taxon>Sordariomycetes</taxon>
        <taxon>Hypocreomycetidae</taxon>
        <taxon>Hypocreales</taxon>
        <taxon>Nectriaceae</taxon>
        <taxon>Fusarium</taxon>
    </lineage>
</organism>
<accession>Q4HW93</accession>
<accession>A0A0E0SLE2</accession>
<accession>V6RVG7</accession>
<reference key="1">
    <citation type="journal article" date="2007" name="Science">
        <title>The Fusarium graminearum genome reveals a link between localized polymorphism and pathogen specialization.</title>
        <authorList>
            <person name="Cuomo C.A."/>
            <person name="Gueldener U."/>
            <person name="Xu J.-R."/>
            <person name="Trail F."/>
            <person name="Turgeon B.G."/>
            <person name="Di Pietro A."/>
            <person name="Walton J.D."/>
            <person name="Ma L.-J."/>
            <person name="Baker S.E."/>
            <person name="Rep M."/>
            <person name="Adam G."/>
            <person name="Antoniw J."/>
            <person name="Baldwin T."/>
            <person name="Calvo S.E."/>
            <person name="Chang Y.-L."/>
            <person name="DeCaprio D."/>
            <person name="Gale L.R."/>
            <person name="Gnerre S."/>
            <person name="Goswami R.S."/>
            <person name="Hammond-Kosack K."/>
            <person name="Harris L.J."/>
            <person name="Hilburn K."/>
            <person name="Kennell J.C."/>
            <person name="Kroken S."/>
            <person name="Magnuson J.K."/>
            <person name="Mannhaupt G."/>
            <person name="Mauceli E.W."/>
            <person name="Mewes H.-W."/>
            <person name="Mitterbauer R."/>
            <person name="Muehlbauer G."/>
            <person name="Muensterkoetter M."/>
            <person name="Nelson D."/>
            <person name="O'Donnell K."/>
            <person name="Ouellet T."/>
            <person name="Qi W."/>
            <person name="Quesneville H."/>
            <person name="Roncero M.I.G."/>
            <person name="Seong K.-Y."/>
            <person name="Tetko I.V."/>
            <person name="Urban M."/>
            <person name="Waalwijk C."/>
            <person name="Ward T.J."/>
            <person name="Yao J."/>
            <person name="Birren B.W."/>
            <person name="Kistler H.C."/>
        </authorList>
    </citation>
    <scope>NUCLEOTIDE SEQUENCE [LARGE SCALE GENOMIC DNA]</scope>
    <source>
        <strain>ATCC MYA-4620 / CBS 123657 / FGSC 9075 / NRRL 31084 / PH-1</strain>
    </source>
</reference>
<reference key="2">
    <citation type="journal article" date="2010" name="Nature">
        <title>Comparative genomics reveals mobile pathogenicity chromosomes in Fusarium.</title>
        <authorList>
            <person name="Ma L.-J."/>
            <person name="van der Does H.C."/>
            <person name="Borkovich K.A."/>
            <person name="Coleman J.J."/>
            <person name="Daboussi M.-J."/>
            <person name="Di Pietro A."/>
            <person name="Dufresne M."/>
            <person name="Freitag M."/>
            <person name="Grabherr M."/>
            <person name="Henrissat B."/>
            <person name="Houterman P.M."/>
            <person name="Kang S."/>
            <person name="Shim W.-B."/>
            <person name="Woloshuk C."/>
            <person name="Xie X."/>
            <person name="Xu J.-R."/>
            <person name="Antoniw J."/>
            <person name="Baker S.E."/>
            <person name="Bluhm B.H."/>
            <person name="Breakspear A."/>
            <person name="Brown D.W."/>
            <person name="Butchko R.A.E."/>
            <person name="Chapman S."/>
            <person name="Coulson R."/>
            <person name="Coutinho P.M."/>
            <person name="Danchin E.G.J."/>
            <person name="Diener A."/>
            <person name="Gale L.R."/>
            <person name="Gardiner D.M."/>
            <person name="Goff S."/>
            <person name="Hammond-Kosack K.E."/>
            <person name="Hilburn K."/>
            <person name="Hua-Van A."/>
            <person name="Jonkers W."/>
            <person name="Kazan K."/>
            <person name="Kodira C.D."/>
            <person name="Koehrsen M."/>
            <person name="Kumar L."/>
            <person name="Lee Y.-H."/>
            <person name="Li L."/>
            <person name="Manners J.M."/>
            <person name="Miranda-Saavedra D."/>
            <person name="Mukherjee M."/>
            <person name="Park G."/>
            <person name="Park J."/>
            <person name="Park S.-Y."/>
            <person name="Proctor R.H."/>
            <person name="Regev A."/>
            <person name="Ruiz-Roldan M.C."/>
            <person name="Sain D."/>
            <person name="Sakthikumar S."/>
            <person name="Sykes S."/>
            <person name="Schwartz D.C."/>
            <person name="Turgeon B.G."/>
            <person name="Wapinski I."/>
            <person name="Yoder O."/>
            <person name="Young S."/>
            <person name="Zeng Q."/>
            <person name="Zhou S."/>
            <person name="Galagan J."/>
            <person name="Cuomo C.A."/>
            <person name="Kistler H.C."/>
            <person name="Rep M."/>
        </authorList>
    </citation>
    <scope>GENOME REANNOTATION</scope>
    <source>
        <strain>ATCC MYA-4620 / CBS 123657 / FGSC 9075 / NRRL 31084 / PH-1</strain>
    </source>
</reference>
<reference key="3">
    <citation type="journal article" date="2015" name="BMC Genomics">
        <title>The completed genome sequence of the pathogenic ascomycete fungus Fusarium graminearum.</title>
        <authorList>
            <person name="King R."/>
            <person name="Urban M."/>
            <person name="Hammond-Kosack M.C.U."/>
            <person name="Hassani-Pak K."/>
            <person name="Hammond-Kosack K.E."/>
        </authorList>
    </citation>
    <scope>NUCLEOTIDE SEQUENCE [LARGE SCALE GENOMIC DNA]</scope>
    <source>
        <strain>ATCC MYA-4620 / CBS 123657 / FGSC 9075 / NRRL 31084 / PH-1</strain>
    </source>
</reference>
<name>SLD2_GIBZE</name>
<gene>
    <name type="primary">SLD2</name>
    <name type="ORF">FGRRES_10765</name>
    <name type="ORF">FGSG_10765</name>
</gene>